<dbReference type="EMBL" id="CP000800">
    <property type="protein sequence ID" value="ABV19214.1"/>
    <property type="molecule type" value="Genomic_DNA"/>
</dbReference>
<dbReference type="RefSeq" id="WP_001296943.1">
    <property type="nucleotide sequence ID" value="NC_009801.1"/>
</dbReference>
<dbReference type="SMR" id="A7ZMA4"/>
<dbReference type="GeneID" id="93775796"/>
<dbReference type="KEGG" id="ecw:EcE24377A_1852"/>
<dbReference type="HOGENOM" id="CLU_083287_18_2_6"/>
<dbReference type="Proteomes" id="UP000001122">
    <property type="component" value="Chromosome"/>
</dbReference>
<dbReference type="GO" id="GO:0003677">
    <property type="term" value="F:DNA binding"/>
    <property type="evidence" value="ECO:0007669"/>
    <property type="project" value="UniProtKB-UniRule"/>
</dbReference>
<dbReference type="GO" id="GO:0003700">
    <property type="term" value="F:DNA-binding transcription factor activity"/>
    <property type="evidence" value="ECO:0007669"/>
    <property type="project" value="UniProtKB-UniRule"/>
</dbReference>
<dbReference type="GO" id="GO:0006950">
    <property type="term" value="P:response to stress"/>
    <property type="evidence" value="ECO:0007669"/>
    <property type="project" value="TreeGrafter"/>
</dbReference>
<dbReference type="FunFam" id="1.10.10.10:FF:000261">
    <property type="entry name" value="Transcriptional regulator SlyA"/>
    <property type="match status" value="1"/>
</dbReference>
<dbReference type="Gene3D" id="1.10.10.10">
    <property type="entry name" value="Winged helix-like DNA-binding domain superfamily/Winged helix DNA-binding domain"/>
    <property type="match status" value="1"/>
</dbReference>
<dbReference type="HAMAP" id="MF_01819">
    <property type="entry name" value="HTH_type_SlyA"/>
    <property type="match status" value="1"/>
</dbReference>
<dbReference type="InterPro" id="IPR000835">
    <property type="entry name" value="HTH_MarR-typ"/>
</dbReference>
<dbReference type="InterPro" id="IPR039422">
    <property type="entry name" value="MarR/SlyA-like"/>
</dbReference>
<dbReference type="InterPro" id="IPR023187">
    <property type="entry name" value="Tscrpt_reg_MarR-type_CS"/>
</dbReference>
<dbReference type="InterPro" id="IPR023071">
    <property type="entry name" value="Tscrpt_reg_SlyA"/>
</dbReference>
<dbReference type="InterPro" id="IPR036388">
    <property type="entry name" value="WH-like_DNA-bd_sf"/>
</dbReference>
<dbReference type="InterPro" id="IPR036390">
    <property type="entry name" value="WH_DNA-bd_sf"/>
</dbReference>
<dbReference type="NCBIfam" id="NF002926">
    <property type="entry name" value="PRK03573.1"/>
    <property type="match status" value="1"/>
</dbReference>
<dbReference type="PANTHER" id="PTHR33164:SF64">
    <property type="entry name" value="TRANSCRIPTIONAL REGULATOR SLYA"/>
    <property type="match status" value="1"/>
</dbReference>
<dbReference type="PANTHER" id="PTHR33164">
    <property type="entry name" value="TRANSCRIPTIONAL REGULATOR, MARR FAMILY"/>
    <property type="match status" value="1"/>
</dbReference>
<dbReference type="Pfam" id="PF01047">
    <property type="entry name" value="MarR"/>
    <property type="match status" value="1"/>
</dbReference>
<dbReference type="PRINTS" id="PR00598">
    <property type="entry name" value="HTHMARR"/>
</dbReference>
<dbReference type="SMART" id="SM00347">
    <property type="entry name" value="HTH_MARR"/>
    <property type="match status" value="1"/>
</dbReference>
<dbReference type="SUPFAM" id="SSF46785">
    <property type="entry name" value="Winged helix' DNA-binding domain"/>
    <property type="match status" value="1"/>
</dbReference>
<dbReference type="PROSITE" id="PS01117">
    <property type="entry name" value="HTH_MARR_1"/>
    <property type="match status" value="1"/>
</dbReference>
<dbReference type="PROSITE" id="PS50995">
    <property type="entry name" value="HTH_MARR_2"/>
    <property type="match status" value="1"/>
</dbReference>
<accession>A7ZMA4</accession>
<organism>
    <name type="scientific">Escherichia coli O139:H28 (strain E24377A / ETEC)</name>
    <dbReference type="NCBI Taxonomy" id="331111"/>
    <lineage>
        <taxon>Bacteria</taxon>
        <taxon>Pseudomonadati</taxon>
        <taxon>Pseudomonadota</taxon>
        <taxon>Gammaproteobacteria</taxon>
        <taxon>Enterobacterales</taxon>
        <taxon>Enterobacteriaceae</taxon>
        <taxon>Escherichia</taxon>
    </lineage>
</organism>
<reference key="1">
    <citation type="journal article" date="2008" name="J. Bacteriol.">
        <title>The pangenome structure of Escherichia coli: comparative genomic analysis of E. coli commensal and pathogenic isolates.</title>
        <authorList>
            <person name="Rasko D.A."/>
            <person name="Rosovitz M.J."/>
            <person name="Myers G.S.A."/>
            <person name="Mongodin E.F."/>
            <person name="Fricke W.F."/>
            <person name="Gajer P."/>
            <person name="Crabtree J."/>
            <person name="Sebaihia M."/>
            <person name="Thomson N.R."/>
            <person name="Chaudhuri R."/>
            <person name="Henderson I.R."/>
            <person name="Sperandio V."/>
            <person name="Ravel J."/>
        </authorList>
    </citation>
    <scope>NUCLEOTIDE SEQUENCE [LARGE SCALE GENOMIC DNA]</scope>
    <source>
        <strain>E24377A / ETEC</strain>
    </source>
</reference>
<comment type="function">
    <text evidence="1">Transcription regulator that can specifically activate or repress expression of target genes.</text>
</comment>
<comment type="subunit">
    <text evidence="1">Homodimer.</text>
</comment>
<comment type="similarity">
    <text evidence="1">Belongs to the SlyA family.</text>
</comment>
<gene>
    <name evidence="1" type="primary">slyA</name>
    <name type="ordered locus">EcE24377A_1852</name>
</gene>
<protein>
    <recommendedName>
        <fullName evidence="1">Transcriptional regulator SlyA</fullName>
    </recommendedName>
</protein>
<proteinExistence type="inferred from homology"/>
<keyword id="KW-0010">Activator</keyword>
<keyword id="KW-0238">DNA-binding</keyword>
<keyword id="KW-1185">Reference proteome</keyword>
<keyword id="KW-0678">Repressor</keyword>
<keyword id="KW-0804">Transcription</keyword>
<keyword id="KW-0805">Transcription regulation</keyword>
<sequence>MESPLGSDLARLVRIWRALIDHRLKPLELTQTHWVTLHNIHQLPPDQSQIQLAKAIGIEQPSLVRTLDQLEEKGLISRQTCASDRRAKRIKLTEKAEPLISEMEAVINKTRAEILHGISAEELEQLITLIAKLEHNIIELQAKG</sequence>
<name>SLYA_ECO24</name>
<feature type="chain" id="PRO_1000070352" description="Transcriptional regulator SlyA">
    <location>
        <begin position="1"/>
        <end position="144"/>
    </location>
</feature>
<feature type="domain" description="HTH marR-type" evidence="1">
    <location>
        <begin position="2"/>
        <end position="135"/>
    </location>
</feature>
<feature type="DNA-binding region" description="H-T-H motif" evidence="1">
    <location>
        <begin position="49"/>
        <end position="72"/>
    </location>
</feature>
<evidence type="ECO:0000255" key="1">
    <source>
        <dbReference type="HAMAP-Rule" id="MF_01819"/>
    </source>
</evidence>